<name>RIR2_HHV1K</name>
<reference key="1">
    <citation type="journal article" date="1982" name="J. Virol.">
        <title>Detailed characterization of an apparently unspliced beta herpes simplex virus type 1 gene mapping in the interior of another.</title>
        <authorList>
            <person name="Draper K.G."/>
            <person name="Frink R.J."/>
            <person name="Wagner E.K."/>
        </authorList>
    </citation>
    <scope>NUCLEOTIDE SEQUENCE [GENOMIC DNA]</scope>
</reference>
<reference key="2">
    <citation type="submission" date="1995-05" db="EMBL/GenBank/DDBJ databases">
        <authorList>
            <person name="Wagner E.K."/>
        </authorList>
    </citation>
    <scope>SEQUENCE REVISION</scope>
</reference>
<reference key="3">
    <citation type="journal article" date="2009" name="Trends Biochem. Sci.">
        <title>Tinkering with a viral ribonucleotide reductase.</title>
        <authorList>
            <person name="Lembo D."/>
            <person name="Brune W."/>
        </authorList>
    </citation>
    <scope>REVIEW</scope>
</reference>
<sequence>MDSAAPALSPALTAHTGHSATADLAIQIPKCPDPERYFYTSQCPDINHLRSLSILNRWLETELVFVGDEEDVSKLSEGELSFYRFLFAFLSAADDLVTENLGGLSGLFEQKDILHYYVEQECIEVAHSRVYNIIQLVLFHNNDQARREYVAGTINHPAIRAKVDWLEARVRECASVPEKFILMILIEGIFFAASFAAIAYLRTNNLLRVTCQSNDLISRDEAVHTTASCYIYNNYLGGHAKPPPDRVYGLFRQAVEIEIGFIRSQAPTDSHILSPAALAAIENYVRFSADRLLGLIHMKPLFSAPPPDASFPLSLMSTDKHTNFFECRSTSYAGAVVNDL</sequence>
<gene>
    <name evidence="1" type="primary">RIR2</name>
    <name type="synonym">UL40</name>
</gene>
<protein>
    <recommendedName>
        <fullName evidence="1">Ribonucleoside-diphosphate reductase small subunit</fullName>
        <ecNumber evidence="1">1.17.4.1</ecNumber>
    </recommendedName>
    <alternativeName>
        <fullName evidence="1">Ribonucleotide reductase small subunit</fullName>
    </alternativeName>
</protein>
<proteinExistence type="inferred from homology"/>
<comment type="function">
    <text evidence="1">Ribonucleoside-diphosphate reductase holoenzyme provides the precursors necessary for viral DNA synthesis. Allows virus growth in non-dividing cells, as well as reactivation from latency in infected hosts. Catalyzes the biosynthesis of deoxyribonucleotides from the corresponding ribonucleotides.</text>
</comment>
<comment type="catalytic activity">
    <reaction evidence="1">
        <text>a 2'-deoxyribonucleoside 5'-diphosphate + [thioredoxin]-disulfide + H2O = a ribonucleoside 5'-diphosphate + [thioredoxin]-dithiol</text>
        <dbReference type="Rhea" id="RHEA:23252"/>
        <dbReference type="Rhea" id="RHEA-COMP:10698"/>
        <dbReference type="Rhea" id="RHEA-COMP:10700"/>
        <dbReference type="ChEBI" id="CHEBI:15377"/>
        <dbReference type="ChEBI" id="CHEBI:29950"/>
        <dbReference type="ChEBI" id="CHEBI:50058"/>
        <dbReference type="ChEBI" id="CHEBI:57930"/>
        <dbReference type="ChEBI" id="CHEBI:73316"/>
        <dbReference type="EC" id="1.17.4.1"/>
    </reaction>
</comment>
<comment type="cofactor">
    <cofactor evidence="1">
        <name>Fe cation</name>
        <dbReference type="ChEBI" id="CHEBI:24875"/>
    </cofactor>
</comment>
<comment type="subunit">
    <text evidence="1">Heterotetramer composed of a homodimer of the large subunit (R1) and a homodimer of the small subunit (R2). Larger multisubunit protein complex are also active, composed of (R1)n(R2)n.</text>
</comment>
<comment type="subcellular location">
    <subcellularLocation>
        <location evidence="1">Host membrane</location>
        <topology evidence="1">Single-pass membrane protein</topology>
    </subcellularLocation>
</comment>
<comment type="similarity">
    <text evidence="1">Belongs to the ribonucleoside diphosphate reductase small chain family.</text>
</comment>
<organism>
    <name type="scientific">Human herpesvirus 1 (strain KOS)</name>
    <name type="common">HHV-1</name>
    <name type="synonym">Human herpes simplex virus 1</name>
    <dbReference type="NCBI Taxonomy" id="10306"/>
    <lineage>
        <taxon>Viruses</taxon>
        <taxon>Duplodnaviria</taxon>
        <taxon>Heunggongvirae</taxon>
        <taxon>Peploviricota</taxon>
        <taxon>Herviviricetes</taxon>
        <taxon>Herpesvirales</taxon>
        <taxon>Orthoherpesviridae</taxon>
        <taxon>Alphaherpesvirinae</taxon>
        <taxon>Simplexvirus</taxon>
        <taxon>Simplexvirus humanalpha1</taxon>
        <taxon>Human herpesvirus 1</taxon>
    </lineage>
</organism>
<accession>P06474</accession>
<keyword id="KW-0235">DNA replication</keyword>
<keyword id="KW-1043">Host membrane</keyword>
<keyword id="KW-0408">Iron</keyword>
<keyword id="KW-0472">Membrane</keyword>
<keyword id="KW-0479">Metal-binding</keyword>
<keyword id="KW-0560">Oxidoreductase</keyword>
<keyword id="KW-0812">Transmembrane</keyword>
<keyword id="KW-1133">Transmembrane helix</keyword>
<keyword id="KW-1251">Viral latency</keyword>
<keyword id="KW-1272">Viral reactivation from latency</keyword>
<dbReference type="EC" id="1.17.4.1" evidence="1"/>
<dbReference type="EMBL" id="J02212">
    <property type="protein sequence ID" value="AAA66436.1"/>
    <property type="molecule type" value="Genomic_DNA"/>
</dbReference>
<dbReference type="SMR" id="P06474"/>
<dbReference type="GO" id="GO:0033644">
    <property type="term" value="C:host cell membrane"/>
    <property type="evidence" value="ECO:0007669"/>
    <property type="project" value="UniProtKB-SubCell"/>
</dbReference>
<dbReference type="GO" id="GO:0016020">
    <property type="term" value="C:membrane"/>
    <property type="evidence" value="ECO:0007669"/>
    <property type="project" value="UniProtKB-KW"/>
</dbReference>
<dbReference type="GO" id="GO:0046872">
    <property type="term" value="F:metal ion binding"/>
    <property type="evidence" value="ECO:0007669"/>
    <property type="project" value="UniProtKB-KW"/>
</dbReference>
<dbReference type="GO" id="GO:0004748">
    <property type="term" value="F:ribonucleoside-diphosphate reductase activity, thioredoxin disulfide as acceptor"/>
    <property type="evidence" value="ECO:0007669"/>
    <property type="project" value="UniProtKB-EC"/>
</dbReference>
<dbReference type="GO" id="GO:0009263">
    <property type="term" value="P:deoxyribonucleotide biosynthetic process"/>
    <property type="evidence" value="ECO:0007669"/>
    <property type="project" value="InterPro"/>
</dbReference>
<dbReference type="GO" id="GO:0006260">
    <property type="term" value="P:DNA replication"/>
    <property type="evidence" value="ECO:0007669"/>
    <property type="project" value="UniProtKB-KW"/>
</dbReference>
<dbReference type="GO" id="GO:0019046">
    <property type="term" value="P:release from viral latency"/>
    <property type="evidence" value="ECO:0007669"/>
    <property type="project" value="UniProtKB-KW"/>
</dbReference>
<dbReference type="CDD" id="cd01049">
    <property type="entry name" value="RNRR2"/>
    <property type="match status" value="1"/>
</dbReference>
<dbReference type="FunFam" id="1.10.620.20:FF:000021">
    <property type="entry name" value="Ribonucleoside-diphosphate reductase small subunit"/>
    <property type="match status" value="1"/>
</dbReference>
<dbReference type="Gene3D" id="1.10.620.20">
    <property type="entry name" value="Ribonucleotide Reductase, subunit A"/>
    <property type="match status" value="1"/>
</dbReference>
<dbReference type="HAMAP" id="MF_04028">
    <property type="entry name" value="HSV_RIR2"/>
    <property type="match status" value="1"/>
</dbReference>
<dbReference type="InterPro" id="IPR009078">
    <property type="entry name" value="Ferritin-like_SF"/>
</dbReference>
<dbReference type="InterPro" id="IPR034715">
    <property type="entry name" value="HSV_RIR2"/>
</dbReference>
<dbReference type="InterPro" id="IPR012348">
    <property type="entry name" value="RNR-like"/>
</dbReference>
<dbReference type="InterPro" id="IPR033909">
    <property type="entry name" value="RNR_small"/>
</dbReference>
<dbReference type="InterPro" id="IPR030475">
    <property type="entry name" value="RNR_small_AS"/>
</dbReference>
<dbReference type="InterPro" id="IPR000358">
    <property type="entry name" value="RNR_small_fam"/>
</dbReference>
<dbReference type="PANTHER" id="PTHR23409">
    <property type="entry name" value="RIBONUCLEOSIDE-DIPHOSPHATE REDUCTASE SMALL CHAIN"/>
    <property type="match status" value="1"/>
</dbReference>
<dbReference type="PANTHER" id="PTHR23409:SF18">
    <property type="entry name" value="RIBONUCLEOSIDE-DIPHOSPHATE REDUCTASE SUBUNIT M2"/>
    <property type="match status" value="1"/>
</dbReference>
<dbReference type="Pfam" id="PF00268">
    <property type="entry name" value="Ribonuc_red_sm"/>
    <property type="match status" value="1"/>
</dbReference>
<dbReference type="SUPFAM" id="SSF47240">
    <property type="entry name" value="Ferritin-like"/>
    <property type="match status" value="1"/>
</dbReference>
<dbReference type="PROSITE" id="PS00368">
    <property type="entry name" value="RIBORED_SMALL"/>
    <property type="match status" value="1"/>
</dbReference>
<organismHost>
    <name type="scientific">Homo sapiens</name>
    <name type="common">Human</name>
    <dbReference type="NCBI Taxonomy" id="9606"/>
</organismHost>
<evidence type="ECO:0000255" key="1">
    <source>
        <dbReference type="HAMAP-Rule" id="MF_04028"/>
    </source>
</evidence>
<feature type="chain" id="PRO_0000190504" description="Ribonucleoside-diphosphate reductase small subunit">
    <location>
        <begin position="1"/>
        <end position="340"/>
    </location>
</feature>
<feature type="transmembrane region" description="Helical" evidence="1">
    <location>
        <begin position="180"/>
        <end position="200"/>
    </location>
</feature>
<feature type="active site" evidence="1">
    <location>
        <position position="131"/>
    </location>
</feature>
<feature type="binding site" evidence="1">
    <location>
        <position position="94"/>
    </location>
    <ligand>
        <name>Fe cation</name>
        <dbReference type="ChEBI" id="CHEBI:24875"/>
        <label>1</label>
    </ligand>
</feature>
<feature type="binding site" evidence="1">
    <location>
        <position position="124"/>
    </location>
    <ligand>
        <name>Fe cation</name>
        <dbReference type="ChEBI" id="CHEBI:24875"/>
        <label>1</label>
    </ligand>
</feature>
<feature type="binding site" evidence="1">
    <location>
        <position position="124"/>
    </location>
    <ligand>
        <name>Fe cation</name>
        <dbReference type="ChEBI" id="CHEBI:24875"/>
        <label>2</label>
    </ligand>
</feature>
<feature type="binding site" evidence="1">
    <location>
        <position position="127"/>
    </location>
    <ligand>
        <name>Fe cation</name>
        <dbReference type="ChEBI" id="CHEBI:24875"/>
        <label>1</label>
    </ligand>
</feature>
<feature type="binding site" evidence="1">
    <location>
        <position position="187"/>
    </location>
    <ligand>
        <name>Fe cation</name>
        <dbReference type="ChEBI" id="CHEBI:24875"/>
        <label>2</label>
    </ligand>
</feature>
<feature type="binding site" evidence="1">
    <location>
        <position position="221"/>
    </location>
    <ligand>
        <name>Fe cation</name>
        <dbReference type="ChEBI" id="CHEBI:24875"/>
        <label>2</label>
    </ligand>
</feature>
<feature type="binding site" evidence="1">
    <location>
        <position position="224"/>
    </location>
    <ligand>
        <name>Fe cation</name>
        <dbReference type="ChEBI" id="CHEBI:24875"/>
        <label>2</label>
    </ligand>
</feature>